<protein>
    <recommendedName>
        <fullName evidence="2">Small ribosomal subunit protein uS12</fullName>
    </recommendedName>
    <alternativeName>
        <fullName evidence="4">30S ribosomal protein S12</fullName>
    </alternativeName>
</protein>
<evidence type="ECO:0000250" key="1"/>
<evidence type="ECO:0000255" key="2">
    <source>
        <dbReference type="HAMAP-Rule" id="MF_00403"/>
    </source>
</evidence>
<evidence type="ECO:0000256" key="3">
    <source>
        <dbReference type="SAM" id="MobiDB-lite"/>
    </source>
</evidence>
<evidence type="ECO:0000305" key="4"/>
<dbReference type="EMBL" id="CP001130">
    <property type="protein sequence ID" value="ACG56950.1"/>
    <property type="molecule type" value="Genomic_DNA"/>
</dbReference>
<dbReference type="RefSeq" id="WP_012513307.1">
    <property type="nucleotide sequence ID" value="NC_011126.1"/>
</dbReference>
<dbReference type="SMR" id="B4U739"/>
<dbReference type="STRING" id="380749.HY04AAS1_0260"/>
<dbReference type="KEGG" id="hya:HY04AAS1_0260"/>
<dbReference type="eggNOG" id="COG0048">
    <property type="taxonomic scope" value="Bacteria"/>
</dbReference>
<dbReference type="HOGENOM" id="CLU_104295_1_2_0"/>
<dbReference type="OrthoDB" id="9802366at2"/>
<dbReference type="GO" id="GO:0015935">
    <property type="term" value="C:small ribosomal subunit"/>
    <property type="evidence" value="ECO:0007669"/>
    <property type="project" value="InterPro"/>
</dbReference>
<dbReference type="GO" id="GO:0019843">
    <property type="term" value="F:rRNA binding"/>
    <property type="evidence" value="ECO:0007669"/>
    <property type="project" value="UniProtKB-UniRule"/>
</dbReference>
<dbReference type="GO" id="GO:0003735">
    <property type="term" value="F:structural constituent of ribosome"/>
    <property type="evidence" value="ECO:0007669"/>
    <property type="project" value="InterPro"/>
</dbReference>
<dbReference type="GO" id="GO:0000049">
    <property type="term" value="F:tRNA binding"/>
    <property type="evidence" value="ECO:0007669"/>
    <property type="project" value="UniProtKB-UniRule"/>
</dbReference>
<dbReference type="GO" id="GO:0006412">
    <property type="term" value="P:translation"/>
    <property type="evidence" value="ECO:0007669"/>
    <property type="project" value="UniProtKB-UniRule"/>
</dbReference>
<dbReference type="CDD" id="cd03368">
    <property type="entry name" value="Ribosomal_S12"/>
    <property type="match status" value="1"/>
</dbReference>
<dbReference type="FunFam" id="2.40.50.140:FF:000001">
    <property type="entry name" value="30S ribosomal protein S12"/>
    <property type="match status" value="1"/>
</dbReference>
<dbReference type="Gene3D" id="2.40.50.140">
    <property type="entry name" value="Nucleic acid-binding proteins"/>
    <property type="match status" value="1"/>
</dbReference>
<dbReference type="HAMAP" id="MF_00403_B">
    <property type="entry name" value="Ribosomal_uS12_B"/>
    <property type="match status" value="1"/>
</dbReference>
<dbReference type="InterPro" id="IPR012340">
    <property type="entry name" value="NA-bd_OB-fold"/>
</dbReference>
<dbReference type="InterPro" id="IPR006032">
    <property type="entry name" value="Ribosomal_uS12"/>
</dbReference>
<dbReference type="InterPro" id="IPR005679">
    <property type="entry name" value="Ribosomal_uS12_bac"/>
</dbReference>
<dbReference type="NCBIfam" id="TIGR00981">
    <property type="entry name" value="rpsL_bact"/>
    <property type="match status" value="1"/>
</dbReference>
<dbReference type="PANTHER" id="PTHR11652">
    <property type="entry name" value="30S RIBOSOMAL PROTEIN S12 FAMILY MEMBER"/>
    <property type="match status" value="1"/>
</dbReference>
<dbReference type="Pfam" id="PF00164">
    <property type="entry name" value="Ribosom_S12_S23"/>
    <property type="match status" value="1"/>
</dbReference>
<dbReference type="PIRSF" id="PIRSF002133">
    <property type="entry name" value="Ribosomal_S12/S23"/>
    <property type="match status" value="1"/>
</dbReference>
<dbReference type="PRINTS" id="PR01034">
    <property type="entry name" value="RIBOSOMALS12"/>
</dbReference>
<dbReference type="SUPFAM" id="SSF50249">
    <property type="entry name" value="Nucleic acid-binding proteins"/>
    <property type="match status" value="1"/>
</dbReference>
<dbReference type="PROSITE" id="PS00055">
    <property type="entry name" value="RIBOSOMAL_S12"/>
    <property type="match status" value="1"/>
</dbReference>
<reference key="1">
    <citation type="journal article" date="2009" name="J. Bacteriol.">
        <title>Complete and draft genome sequences of six members of the Aquificales.</title>
        <authorList>
            <person name="Reysenbach A.-L."/>
            <person name="Hamamura N."/>
            <person name="Podar M."/>
            <person name="Griffiths E."/>
            <person name="Ferreira S."/>
            <person name="Hochstein R."/>
            <person name="Heidelberg J."/>
            <person name="Johnson J."/>
            <person name="Mead D."/>
            <person name="Pohorille A."/>
            <person name="Sarmiento M."/>
            <person name="Schweighofer K."/>
            <person name="Seshadri R."/>
            <person name="Voytek M.A."/>
        </authorList>
    </citation>
    <scope>NUCLEOTIDE SEQUENCE [LARGE SCALE GENOMIC DNA]</scope>
    <source>
        <strain>Y04AAS1</strain>
    </source>
</reference>
<sequence>MPTVNQLIKEGREKIKKKSKAPALQGNPQKRGVCVRVYTVTPKKPNSALRKVARVRLSNGIEVTCYIPGEGHNLQEHSIVLVRGGRVKDLPGVRYKIIRGALDTAGVANRRQSRSKYGAKRPKAGAAQATKGGKK</sequence>
<keyword id="KW-0488">Methylation</keyword>
<keyword id="KW-0687">Ribonucleoprotein</keyword>
<keyword id="KW-0689">Ribosomal protein</keyword>
<keyword id="KW-0694">RNA-binding</keyword>
<keyword id="KW-0699">rRNA-binding</keyword>
<keyword id="KW-0820">tRNA-binding</keyword>
<comment type="function">
    <text evidence="2">With S4 and S5 plays an important role in translational accuracy.</text>
</comment>
<comment type="function">
    <text evidence="2">Interacts with and stabilizes bases of the 16S rRNA that are involved in tRNA selection in the A site and with the mRNA backbone. Located at the interface of the 30S and 50S subunits, it traverses the body of the 30S subunit contacting proteins on the other side and probably holding the rRNA structure together. The combined cluster of proteins S8, S12 and S17 appears to hold together the shoulder and platform of the 30S subunit.</text>
</comment>
<comment type="subunit">
    <text evidence="2">Part of the 30S ribosomal subunit. Contacts proteins S8 and S17. May interact with IF1 in the 30S initiation complex.</text>
</comment>
<comment type="similarity">
    <text evidence="2">Belongs to the universal ribosomal protein uS12 family.</text>
</comment>
<name>RS12_HYDS0</name>
<organism>
    <name type="scientific">Hydrogenobaculum sp. (strain Y04AAS1)</name>
    <dbReference type="NCBI Taxonomy" id="380749"/>
    <lineage>
        <taxon>Bacteria</taxon>
        <taxon>Pseudomonadati</taxon>
        <taxon>Aquificota</taxon>
        <taxon>Aquificia</taxon>
        <taxon>Aquificales</taxon>
        <taxon>Aquificaceae</taxon>
        <taxon>Hydrogenobaculum</taxon>
    </lineage>
</organism>
<proteinExistence type="inferred from homology"/>
<feature type="chain" id="PRO_1000194179" description="Small ribosomal subunit protein uS12">
    <location>
        <begin position="1"/>
        <end position="135"/>
    </location>
</feature>
<feature type="region of interest" description="Disordered" evidence="3">
    <location>
        <begin position="106"/>
        <end position="135"/>
    </location>
</feature>
<feature type="compositionally biased region" description="Basic residues" evidence="3">
    <location>
        <begin position="111"/>
        <end position="123"/>
    </location>
</feature>
<feature type="compositionally biased region" description="Low complexity" evidence="3">
    <location>
        <begin position="124"/>
        <end position="135"/>
    </location>
</feature>
<feature type="modified residue" description="3-methylthioaspartic acid" evidence="1">
    <location>
        <position position="89"/>
    </location>
</feature>
<accession>B4U739</accession>
<gene>
    <name evidence="2" type="primary">rpsL</name>
    <name type="ordered locus">HY04AAS1_0260</name>
</gene>